<name>LFTR_BRASO</name>
<sequence>MNSRDSAASEITPEVLLRAYACGIFPMAESADDPSLFWVEPELRGVIPLDGFRVASRLARTVRSDAFTLTVNQAFKAVMDGCAAPQPGREDTWINRRIRELYGGLHAMGHCHSVECWQDGELVGGLYGVSLGRAFFGESMFHRARDASKVALVHLVARLIAGGFELLDTQYVTEHLKTFGAVEIPRRRYTVLLEKALTGPAANFARLPTDRPLAGAEALAIIAERG</sequence>
<accession>A4YTQ2</accession>
<feature type="chain" id="PRO_0000304327" description="Leucyl/phenylalanyl-tRNA--protein transferase">
    <location>
        <begin position="1"/>
        <end position="226"/>
    </location>
</feature>
<keyword id="KW-0012">Acyltransferase</keyword>
<keyword id="KW-0963">Cytoplasm</keyword>
<keyword id="KW-1185">Reference proteome</keyword>
<keyword id="KW-0808">Transferase</keyword>
<reference key="1">
    <citation type="journal article" date="2007" name="Science">
        <title>Legumes symbioses: absence of nod genes in photosynthetic bradyrhizobia.</title>
        <authorList>
            <person name="Giraud E."/>
            <person name="Moulin L."/>
            <person name="Vallenet D."/>
            <person name="Barbe V."/>
            <person name="Cytryn E."/>
            <person name="Avarre J.-C."/>
            <person name="Jaubert M."/>
            <person name="Simon D."/>
            <person name="Cartieaux F."/>
            <person name="Prin Y."/>
            <person name="Bena G."/>
            <person name="Hannibal L."/>
            <person name="Fardoux J."/>
            <person name="Kojadinovic M."/>
            <person name="Vuillet L."/>
            <person name="Lajus A."/>
            <person name="Cruveiller S."/>
            <person name="Rouy Z."/>
            <person name="Mangenot S."/>
            <person name="Segurens B."/>
            <person name="Dossat C."/>
            <person name="Franck W.L."/>
            <person name="Chang W.-S."/>
            <person name="Saunders E."/>
            <person name="Bruce D."/>
            <person name="Richardson P."/>
            <person name="Normand P."/>
            <person name="Dreyfus B."/>
            <person name="Pignol D."/>
            <person name="Stacey G."/>
            <person name="Emerich D."/>
            <person name="Vermeglio A."/>
            <person name="Medigue C."/>
            <person name="Sadowsky M."/>
        </authorList>
    </citation>
    <scope>NUCLEOTIDE SEQUENCE [LARGE SCALE GENOMIC DNA]</scope>
    <source>
        <strain>ORS 278</strain>
    </source>
</reference>
<gene>
    <name evidence="1" type="primary">aat</name>
    <name type="ordered locus">BRADO3496</name>
</gene>
<proteinExistence type="inferred from homology"/>
<evidence type="ECO:0000255" key="1">
    <source>
        <dbReference type="HAMAP-Rule" id="MF_00688"/>
    </source>
</evidence>
<protein>
    <recommendedName>
        <fullName evidence="1">Leucyl/phenylalanyl-tRNA--protein transferase</fullName>
        <ecNumber evidence="1">2.3.2.6</ecNumber>
    </recommendedName>
    <alternativeName>
        <fullName evidence="1">L/F-transferase</fullName>
    </alternativeName>
    <alternativeName>
        <fullName evidence="1">Leucyltransferase</fullName>
    </alternativeName>
    <alternativeName>
        <fullName evidence="1">Phenyalanyltransferase</fullName>
    </alternativeName>
</protein>
<comment type="function">
    <text evidence="1">Functions in the N-end rule pathway of protein degradation where it conjugates Leu, Phe and, less efficiently, Met from aminoacyl-tRNAs to the N-termini of proteins containing an N-terminal arginine or lysine.</text>
</comment>
<comment type="catalytic activity">
    <reaction evidence="1">
        <text>N-terminal L-lysyl-[protein] + L-leucyl-tRNA(Leu) = N-terminal L-leucyl-L-lysyl-[protein] + tRNA(Leu) + H(+)</text>
        <dbReference type="Rhea" id="RHEA:12340"/>
        <dbReference type="Rhea" id="RHEA-COMP:9613"/>
        <dbReference type="Rhea" id="RHEA-COMP:9622"/>
        <dbReference type="Rhea" id="RHEA-COMP:12670"/>
        <dbReference type="Rhea" id="RHEA-COMP:12671"/>
        <dbReference type="ChEBI" id="CHEBI:15378"/>
        <dbReference type="ChEBI" id="CHEBI:65249"/>
        <dbReference type="ChEBI" id="CHEBI:78442"/>
        <dbReference type="ChEBI" id="CHEBI:78494"/>
        <dbReference type="ChEBI" id="CHEBI:133043"/>
        <dbReference type="EC" id="2.3.2.6"/>
    </reaction>
</comment>
<comment type="catalytic activity">
    <reaction evidence="1">
        <text>N-terminal L-arginyl-[protein] + L-leucyl-tRNA(Leu) = N-terminal L-leucyl-L-arginyl-[protein] + tRNA(Leu) + H(+)</text>
        <dbReference type="Rhea" id="RHEA:50416"/>
        <dbReference type="Rhea" id="RHEA-COMP:9613"/>
        <dbReference type="Rhea" id="RHEA-COMP:9622"/>
        <dbReference type="Rhea" id="RHEA-COMP:12672"/>
        <dbReference type="Rhea" id="RHEA-COMP:12673"/>
        <dbReference type="ChEBI" id="CHEBI:15378"/>
        <dbReference type="ChEBI" id="CHEBI:64719"/>
        <dbReference type="ChEBI" id="CHEBI:78442"/>
        <dbReference type="ChEBI" id="CHEBI:78494"/>
        <dbReference type="ChEBI" id="CHEBI:133044"/>
        <dbReference type="EC" id="2.3.2.6"/>
    </reaction>
</comment>
<comment type="catalytic activity">
    <reaction evidence="1">
        <text>L-phenylalanyl-tRNA(Phe) + an N-terminal L-alpha-aminoacyl-[protein] = an N-terminal L-phenylalanyl-L-alpha-aminoacyl-[protein] + tRNA(Phe)</text>
        <dbReference type="Rhea" id="RHEA:43632"/>
        <dbReference type="Rhea" id="RHEA-COMP:9668"/>
        <dbReference type="Rhea" id="RHEA-COMP:9699"/>
        <dbReference type="Rhea" id="RHEA-COMP:10636"/>
        <dbReference type="Rhea" id="RHEA-COMP:10637"/>
        <dbReference type="ChEBI" id="CHEBI:78442"/>
        <dbReference type="ChEBI" id="CHEBI:78531"/>
        <dbReference type="ChEBI" id="CHEBI:78597"/>
        <dbReference type="ChEBI" id="CHEBI:83561"/>
        <dbReference type="EC" id="2.3.2.6"/>
    </reaction>
</comment>
<comment type="subcellular location">
    <subcellularLocation>
        <location evidence="1">Cytoplasm</location>
    </subcellularLocation>
</comment>
<comment type="similarity">
    <text evidence="1">Belongs to the L/F-transferase family.</text>
</comment>
<dbReference type="EC" id="2.3.2.6" evidence="1"/>
<dbReference type="EMBL" id="CU234118">
    <property type="protein sequence ID" value="CAL77278.1"/>
    <property type="molecule type" value="Genomic_DNA"/>
</dbReference>
<dbReference type="RefSeq" id="WP_011926425.1">
    <property type="nucleotide sequence ID" value="NC_009445.1"/>
</dbReference>
<dbReference type="SMR" id="A4YTQ2"/>
<dbReference type="STRING" id="114615.BRADO3496"/>
<dbReference type="KEGG" id="bra:BRADO3496"/>
<dbReference type="eggNOG" id="COG2360">
    <property type="taxonomic scope" value="Bacteria"/>
</dbReference>
<dbReference type="HOGENOM" id="CLU_075045_1_1_5"/>
<dbReference type="OrthoDB" id="9790282at2"/>
<dbReference type="Proteomes" id="UP000001994">
    <property type="component" value="Chromosome"/>
</dbReference>
<dbReference type="GO" id="GO:0005737">
    <property type="term" value="C:cytoplasm"/>
    <property type="evidence" value="ECO:0007669"/>
    <property type="project" value="UniProtKB-SubCell"/>
</dbReference>
<dbReference type="GO" id="GO:0008914">
    <property type="term" value="F:leucyl-tRNA--protein transferase activity"/>
    <property type="evidence" value="ECO:0007669"/>
    <property type="project" value="UniProtKB-UniRule"/>
</dbReference>
<dbReference type="GO" id="GO:0030163">
    <property type="term" value="P:protein catabolic process"/>
    <property type="evidence" value="ECO:0007669"/>
    <property type="project" value="UniProtKB-UniRule"/>
</dbReference>
<dbReference type="FunFam" id="3.40.630.70:FF:000001">
    <property type="entry name" value="Leucyl/phenylalanyl-tRNA--protein transferase"/>
    <property type="match status" value="1"/>
</dbReference>
<dbReference type="Gene3D" id="3.40.630.70">
    <property type="entry name" value="Leucyl/phenylalanyl-tRNA-protein transferase, C-terminal domain"/>
    <property type="match status" value="1"/>
</dbReference>
<dbReference type="Gene3D" id="3.30.70.3550">
    <property type="entry name" value="Leucyl/phenylalanyl-tRNA-protein transferase, N-terminal domain"/>
    <property type="match status" value="1"/>
</dbReference>
<dbReference type="HAMAP" id="MF_00688">
    <property type="entry name" value="Leu_Phe_trans"/>
    <property type="match status" value="1"/>
</dbReference>
<dbReference type="InterPro" id="IPR016181">
    <property type="entry name" value="Acyl_CoA_acyltransferase"/>
</dbReference>
<dbReference type="InterPro" id="IPR004616">
    <property type="entry name" value="Leu/Phe-tRNA_Trfase"/>
</dbReference>
<dbReference type="InterPro" id="IPR042203">
    <property type="entry name" value="Leu/Phe-tRNA_Trfase_C"/>
</dbReference>
<dbReference type="InterPro" id="IPR042221">
    <property type="entry name" value="Leu/Phe-tRNA_Trfase_N"/>
</dbReference>
<dbReference type="NCBIfam" id="TIGR00667">
    <property type="entry name" value="aat"/>
    <property type="match status" value="1"/>
</dbReference>
<dbReference type="PANTHER" id="PTHR30098">
    <property type="entry name" value="LEUCYL/PHENYLALANYL-TRNA--PROTEIN TRANSFERASE"/>
    <property type="match status" value="1"/>
</dbReference>
<dbReference type="PANTHER" id="PTHR30098:SF2">
    <property type="entry name" value="LEUCYL_PHENYLALANYL-TRNA--PROTEIN TRANSFERASE"/>
    <property type="match status" value="1"/>
</dbReference>
<dbReference type="Pfam" id="PF03588">
    <property type="entry name" value="Leu_Phe_trans"/>
    <property type="match status" value="1"/>
</dbReference>
<dbReference type="SUPFAM" id="SSF55729">
    <property type="entry name" value="Acyl-CoA N-acyltransferases (Nat)"/>
    <property type="match status" value="1"/>
</dbReference>
<organism>
    <name type="scientific">Bradyrhizobium sp. (strain ORS 278)</name>
    <dbReference type="NCBI Taxonomy" id="114615"/>
    <lineage>
        <taxon>Bacteria</taxon>
        <taxon>Pseudomonadati</taxon>
        <taxon>Pseudomonadota</taxon>
        <taxon>Alphaproteobacteria</taxon>
        <taxon>Hyphomicrobiales</taxon>
        <taxon>Nitrobacteraceae</taxon>
        <taxon>Bradyrhizobium</taxon>
    </lineage>
</organism>